<organism>
    <name type="scientific">Mus musculus</name>
    <name type="common">Mouse</name>
    <dbReference type="NCBI Taxonomy" id="10090"/>
    <lineage>
        <taxon>Eukaryota</taxon>
        <taxon>Metazoa</taxon>
        <taxon>Chordata</taxon>
        <taxon>Craniata</taxon>
        <taxon>Vertebrata</taxon>
        <taxon>Euteleostomi</taxon>
        <taxon>Mammalia</taxon>
        <taxon>Eutheria</taxon>
        <taxon>Euarchontoglires</taxon>
        <taxon>Glires</taxon>
        <taxon>Rodentia</taxon>
        <taxon>Myomorpha</taxon>
        <taxon>Muroidea</taxon>
        <taxon>Muridae</taxon>
        <taxon>Murinae</taxon>
        <taxon>Mus</taxon>
        <taxon>Mus</taxon>
    </lineage>
</organism>
<accession>P15105</accession>
<accession>Q3TRK7</accession>
<accession>Q64432</accession>
<accession>Q91VC6</accession>
<keyword id="KW-0007">Acetylation</keyword>
<keyword id="KW-0037">Angiogenesis</keyword>
<keyword id="KW-0067">ATP-binding</keyword>
<keyword id="KW-1003">Cell membrane</keyword>
<keyword id="KW-0963">Cytoplasm</keyword>
<keyword id="KW-0903">Direct protein sequencing</keyword>
<keyword id="KW-0256">Endoplasmic reticulum</keyword>
<keyword id="KW-0436">Ligase</keyword>
<keyword id="KW-0449">Lipoprotein</keyword>
<keyword id="KW-0460">Magnesium</keyword>
<keyword id="KW-0464">Manganese</keyword>
<keyword id="KW-0472">Membrane</keyword>
<keyword id="KW-0479">Metal-binding</keyword>
<keyword id="KW-0492">Microsome</keyword>
<keyword id="KW-0496">Mitochondrion</keyword>
<keyword id="KW-0547">Nucleotide-binding</keyword>
<keyword id="KW-0564">Palmitate</keyword>
<keyword id="KW-0597">Phosphoprotein</keyword>
<keyword id="KW-1185">Reference proteome</keyword>
<keyword id="KW-0808">Transferase</keyword>
<keyword id="KW-0832">Ubl conjugation</keyword>
<name>GLNA_MOUSE</name>
<feature type="initiator methionine" description="Removed" evidence="12">
    <location>
        <position position="1"/>
    </location>
</feature>
<feature type="chain" id="PRO_0000153141" description="Glutamine synthetase">
    <location>
        <begin position="2"/>
        <end position="373"/>
    </location>
</feature>
<feature type="domain" description="GS beta-grasp" evidence="4">
    <location>
        <begin position="24"/>
        <end position="106"/>
    </location>
</feature>
<feature type="domain" description="GS catalytic" evidence="5">
    <location>
        <begin position="113"/>
        <end position="373"/>
    </location>
</feature>
<feature type="region of interest" description="Required for glutamine-induced ubiquitination by CRL4(CRBN) and proteasomal degradation" evidence="2">
    <location>
        <begin position="2"/>
        <end position="25"/>
    </location>
</feature>
<feature type="binding site" evidence="2">
    <location>
        <position position="134"/>
    </location>
    <ligand>
        <name>ATP</name>
        <dbReference type="ChEBI" id="CHEBI:30616"/>
    </ligand>
</feature>
<feature type="binding site" evidence="2">
    <location>
        <position position="134"/>
    </location>
    <ligand>
        <name>Mn(2+)</name>
        <dbReference type="ChEBI" id="CHEBI:29035"/>
        <label>1</label>
    </ligand>
</feature>
<feature type="binding site" evidence="2">
    <location>
        <position position="136"/>
    </location>
    <ligand>
        <name>Mn(2+)</name>
        <dbReference type="ChEBI" id="CHEBI:29035"/>
        <label>2</label>
    </ligand>
</feature>
<feature type="binding site" evidence="2">
    <location>
        <position position="196"/>
    </location>
    <ligand>
        <name>Mn(2+)</name>
        <dbReference type="ChEBI" id="CHEBI:29035"/>
        <label>2</label>
    </ligand>
</feature>
<feature type="binding site" evidence="2">
    <location>
        <begin position="203"/>
        <end position="208"/>
    </location>
    <ligand>
        <name>ATP</name>
        <dbReference type="ChEBI" id="CHEBI:30616"/>
    </ligand>
</feature>
<feature type="binding site" evidence="2">
    <location>
        <position position="203"/>
    </location>
    <ligand>
        <name>Mn(2+)</name>
        <dbReference type="ChEBI" id="CHEBI:29035"/>
        <label>2</label>
    </ligand>
</feature>
<feature type="binding site" evidence="3">
    <location>
        <begin position="246"/>
        <end position="247"/>
    </location>
    <ligand>
        <name>L-glutamate</name>
        <dbReference type="ChEBI" id="CHEBI:29985"/>
    </ligand>
</feature>
<feature type="binding site" evidence="2">
    <location>
        <position position="253"/>
    </location>
    <ligand>
        <name>Mn(2+)</name>
        <dbReference type="ChEBI" id="CHEBI:29035"/>
        <label>1</label>
    </ligand>
</feature>
<feature type="binding site" evidence="2">
    <location>
        <begin position="255"/>
        <end position="257"/>
    </location>
    <ligand>
        <name>ATP</name>
        <dbReference type="ChEBI" id="CHEBI:30616"/>
    </ligand>
</feature>
<feature type="binding site" evidence="2">
    <location>
        <position position="319"/>
    </location>
    <ligand>
        <name>ATP</name>
        <dbReference type="ChEBI" id="CHEBI:30616"/>
    </ligand>
</feature>
<feature type="binding site" evidence="3">
    <location>
        <position position="319"/>
    </location>
    <ligand>
        <name>L-glutamate</name>
        <dbReference type="ChEBI" id="CHEBI:29985"/>
    </ligand>
</feature>
<feature type="binding site" evidence="2">
    <location>
        <position position="324"/>
    </location>
    <ligand>
        <name>ATP</name>
        <dbReference type="ChEBI" id="CHEBI:30616"/>
    </ligand>
</feature>
<feature type="binding site" evidence="2">
    <location>
        <begin position="336"/>
        <end position="338"/>
    </location>
    <ligand>
        <name>ADP</name>
        <dbReference type="ChEBI" id="CHEBI:456216"/>
    </ligand>
</feature>
<feature type="binding site" evidence="2">
    <location>
        <position position="338"/>
    </location>
    <ligand>
        <name>Mn(2+)</name>
        <dbReference type="ChEBI" id="CHEBI:29035"/>
        <label>1</label>
    </ligand>
</feature>
<feature type="binding site" evidence="3">
    <location>
        <position position="340"/>
    </location>
    <ligand>
        <name>L-glutamate</name>
        <dbReference type="ChEBI" id="CHEBI:29985"/>
    </ligand>
</feature>
<feature type="modified residue" description="N-acetylalanine" evidence="12">
    <location>
        <position position="2"/>
    </location>
</feature>
<feature type="modified residue" description="N6-acetyllysine" evidence="2">
    <location>
        <position position="11"/>
    </location>
</feature>
<feature type="modified residue" description="N6-acetyllysine" evidence="2">
    <location>
        <position position="14"/>
    </location>
</feature>
<feature type="modified residue" description="Phosphotyrosine" evidence="16">
    <location>
        <position position="104"/>
    </location>
</feature>
<feature type="modified residue" description="Phosphoserine" evidence="17">
    <location>
        <position position="343"/>
    </location>
</feature>
<feature type="sequence conflict" description="In Ref. 1; CAA34381." evidence="14" ref="1">
    <original>K</original>
    <variation>R</variation>
    <location>
        <position position="91"/>
    </location>
</feature>
<feature type="sequence conflict" description="In Ref. 2; AAA17989." evidence="14" ref="2">
    <original>T</original>
    <variation>S</variation>
    <location>
        <position position="111"/>
    </location>
</feature>
<feature type="sequence conflict" description="In Ref. 4; BAE37022." evidence="14" ref="4">
    <original>M</original>
    <variation>L</variation>
    <location>
        <position position="133"/>
    </location>
</feature>
<feature type="sequence conflict" description="In Ref. 1; CAA34381." evidence="14" ref="1">
    <original>G</original>
    <variation>V</variation>
    <location>
        <position position="249"/>
    </location>
</feature>
<feature type="sequence conflict" description="In Ref. 2; AAA17989." evidence="14" ref="2">
    <original>C</original>
    <variation>W</variation>
    <location>
        <position position="269"/>
    </location>
</feature>
<feature type="sequence conflict" description="In Ref. 1; CAA34381." evidence="14" ref="1">
    <original>R</original>
    <variation>A</variation>
    <location>
        <position position="299"/>
    </location>
</feature>
<feature type="sequence conflict" description="In Ref. 1; CAA34381." evidence="14" ref="1">
    <original>PS</original>
    <variation>LR</variation>
    <location>
        <begin position="342"/>
        <end position="343"/>
    </location>
</feature>
<gene>
    <name evidence="13 15" type="primary">Glul</name>
    <name type="synonym">Glns</name>
</gene>
<evidence type="ECO:0000250" key="1">
    <source>
        <dbReference type="UniProtKB" id="P09606"/>
    </source>
</evidence>
<evidence type="ECO:0000250" key="2">
    <source>
        <dbReference type="UniProtKB" id="P15104"/>
    </source>
</evidence>
<evidence type="ECO:0000250" key="3">
    <source>
        <dbReference type="UniProtKB" id="P9WN39"/>
    </source>
</evidence>
<evidence type="ECO:0000255" key="4">
    <source>
        <dbReference type="PROSITE-ProRule" id="PRU01330"/>
    </source>
</evidence>
<evidence type="ECO:0000255" key="5">
    <source>
        <dbReference type="PROSITE-ProRule" id="PRU01331"/>
    </source>
</evidence>
<evidence type="ECO:0000269" key="6">
    <source>
    </source>
</evidence>
<evidence type="ECO:0000269" key="7">
    <source>
    </source>
</evidence>
<evidence type="ECO:0000269" key="8">
    <source>
    </source>
</evidence>
<evidence type="ECO:0000269" key="9">
    <source>
    </source>
</evidence>
<evidence type="ECO:0000269" key="10">
    <source>
    </source>
</evidence>
<evidence type="ECO:0000269" key="11">
    <source>
    </source>
</evidence>
<evidence type="ECO:0000269" key="12">
    <source ref="6"/>
</evidence>
<evidence type="ECO:0000303" key="13">
    <source>
    </source>
</evidence>
<evidence type="ECO:0000305" key="14"/>
<evidence type="ECO:0000312" key="15">
    <source>
        <dbReference type="MGI" id="MGI:95739"/>
    </source>
</evidence>
<evidence type="ECO:0007744" key="16">
    <source>
    </source>
</evidence>
<evidence type="ECO:0007744" key="17">
    <source>
    </source>
</evidence>
<reference key="1">
    <citation type="journal article" date="1989" name="J. Mol. Biol.">
        <title>Mouse glutamine synthetase is encoded by a single gene that can be expressed in a localized fashion.</title>
        <authorList>
            <person name="Kuo C.F."/>
            <person name="Darnell J.E. Jr."/>
        </authorList>
    </citation>
    <scope>NUCLEOTIDE SEQUENCE [MRNA]</scope>
</reference>
<reference key="2">
    <citation type="submission" date="1994-04" db="EMBL/GenBank/DDBJ databases">
        <title>Sequence of a mouse glutamine synthetase cDNA.</title>
        <authorList>
            <person name="Lindemann A.E."/>
            <person name="Tempest P.R."/>
        </authorList>
    </citation>
    <scope>NUCLEOTIDE SEQUENCE [MRNA]</scope>
    <source>
        <tissue>Thymus</tissue>
    </source>
</reference>
<reference key="3">
    <citation type="submission" date="2001-07" db="EMBL/GenBank/DDBJ databases">
        <title>Glutamine synthetase mRNA in rodents.</title>
        <authorList>
            <person name="Labruyere W.T."/>
            <person name="van Hemert F.J."/>
            <person name="Lamers W.H."/>
        </authorList>
    </citation>
    <scope>NUCLEOTIDE SEQUENCE [MRNA]</scope>
    <source>
        <strain>FVB/NJ</strain>
        <tissue>Liver</tissue>
    </source>
</reference>
<reference key="4">
    <citation type="journal article" date="2005" name="Science">
        <title>The transcriptional landscape of the mammalian genome.</title>
        <authorList>
            <person name="Carninci P."/>
            <person name="Kasukawa T."/>
            <person name="Katayama S."/>
            <person name="Gough J."/>
            <person name="Frith M.C."/>
            <person name="Maeda N."/>
            <person name="Oyama R."/>
            <person name="Ravasi T."/>
            <person name="Lenhard B."/>
            <person name="Wells C."/>
            <person name="Kodzius R."/>
            <person name="Shimokawa K."/>
            <person name="Bajic V.B."/>
            <person name="Brenner S.E."/>
            <person name="Batalov S."/>
            <person name="Forrest A.R."/>
            <person name="Zavolan M."/>
            <person name="Davis M.J."/>
            <person name="Wilming L.G."/>
            <person name="Aidinis V."/>
            <person name="Allen J.E."/>
            <person name="Ambesi-Impiombato A."/>
            <person name="Apweiler R."/>
            <person name="Aturaliya R.N."/>
            <person name="Bailey T.L."/>
            <person name="Bansal M."/>
            <person name="Baxter L."/>
            <person name="Beisel K.W."/>
            <person name="Bersano T."/>
            <person name="Bono H."/>
            <person name="Chalk A.M."/>
            <person name="Chiu K.P."/>
            <person name="Choudhary V."/>
            <person name="Christoffels A."/>
            <person name="Clutterbuck D.R."/>
            <person name="Crowe M.L."/>
            <person name="Dalla E."/>
            <person name="Dalrymple B.P."/>
            <person name="de Bono B."/>
            <person name="Della Gatta G."/>
            <person name="di Bernardo D."/>
            <person name="Down T."/>
            <person name="Engstrom P."/>
            <person name="Fagiolini M."/>
            <person name="Faulkner G."/>
            <person name="Fletcher C.F."/>
            <person name="Fukushima T."/>
            <person name="Furuno M."/>
            <person name="Futaki S."/>
            <person name="Gariboldi M."/>
            <person name="Georgii-Hemming P."/>
            <person name="Gingeras T.R."/>
            <person name="Gojobori T."/>
            <person name="Green R.E."/>
            <person name="Gustincich S."/>
            <person name="Harbers M."/>
            <person name="Hayashi Y."/>
            <person name="Hensch T.K."/>
            <person name="Hirokawa N."/>
            <person name="Hill D."/>
            <person name="Huminiecki L."/>
            <person name="Iacono M."/>
            <person name="Ikeo K."/>
            <person name="Iwama A."/>
            <person name="Ishikawa T."/>
            <person name="Jakt M."/>
            <person name="Kanapin A."/>
            <person name="Katoh M."/>
            <person name="Kawasawa Y."/>
            <person name="Kelso J."/>
            <person name="Kitamura H."/>
            <person name="Kitano H."/>
            <person name="Kollias G."/>
            <person name="Krishnan S.P."/>
            <person name="Kruger A."/>
            <person name="Kummerfeld S.K."/>
            <person name="Kurochkin I.V."/>
            <person name="Lareau L.F."/>
            <person name="Lazarevic D."/>
            <person name="Lipovich L."/>
            <person name="Liu J."/>
            <person name="Liuni S."/>
            <person name="McWilliam S."/>
            <person name="Madan Babu M."/>
            <person name="Madera M."/>
            <person name="Marchionni L."/>
            <person name="Matsuda H."/>
            <person name="Matsuzawa S."/>
            <person name="Miki H."/>
            <person name="Mignone F."/>
            <person name="Miyake S."/>
            <person name="Morris K."/>
            <person name="Mottagui-Tabar S."/>
            <person name="Mulder N."/>
            <person name="Nakano N."/>
            <person name="Nakauchi H."/>
            <person name="Ng P."/>
            <person name="Nilsson R."/>
            <person name="Nishiguchi S."/>
            <person name="Nishikawa S."/>
            <person name="Nori F."/>
            <person name="Ohara O."/>
            <person name="Okazaki Y."/>
            <person name="Orlando V."/>
            <person name="Pang K.C."/>
            <person name="Pavan W.J."/>
            <person name="Pavesi G."/>
            <person name="Pesole G."/>
            <person name="Petrovsky N."/>
            <person name="Piazza S."/>
            <person name="Reed J."/>
            <person name="Reid J.F."/>
            <person name="Ring B.Z."/>
            <person name="Ringwald M."/>
            <person name="Rost B."/>
            <person name="Ruan Y."/>
            <person name="Salzberg S.L."/>
            <person name="Sandelin A."/>
            <person name="Schneider C."/>
            <person name="Schoenbach C."/>
            <person name="Sekiguchi K."/>
            <person name="Semple C.A."/>
            <person name="Seno S."/>
            <person name="Sessa L."/>
            <person name="Sheng Y."/>
            <person name="Shibata Y."/>
            <person name="Shimada H."/>
            <person name="Shimada K."/>
            <person name="Silva D."/>
            <person name="Sinclair B."/>
            <person name="Sperling S."/>
            <person name="Stupka E."/>
            <person name="Sugiura K."/>
            <person name="Sultana R."/>
            <person name="Takenaka Y."/>
            <person name="Taki K."/>
            <person name="Tammoja K."/>
            <person name="Tan S.L."/>
            <person name="Tang S."/>
            <person name="Taylor M.S."/>
            <person name="Tegner J."/>
            <person name="Teichmann S.A."/>
            <person name="Ueda H.R."/>
            <person name="van Nimwegen E."/>
            <person name="Verardo R."/>
            <person name="Wei C.L."/>
            <person name="Yagi K."/>
            <person name="Yamanishi H."/>
            <person name="Zabarovsky E."/>
            <person name="Zhu S."/>
            <person name="Zimmer A."/>
            <person name="Hide W."/>
            <person name="Bult C."/>
            <person name="Grimmond S.M."/>
            <person name="Teasdale R.D."/>
            <person name="Liu E.T."/>
            <person name="Brusic V."/>
            <person name="Quackenbush J."/>
            <person name="Wahlestedt C."/>
            <person name="Mattick J.S."/>
            <person name="Hume D.A."/>
            <person name="Kai C."/>
            <person name="Sasaki D."/>
            <person name="Tomaru Y."/>
            <person name="Fukuda S."/>
            <person name="Kanamori-Katayama M."/>
            <person name="Suzuki M."/>
            <person name="Aoki J."/>
            <person name="Arakawa T."/>
            <person name="Iida J."/>
            <person name="Imamura K."/>
            <person name="Itoh M."/>
            <person name="Kato T."/>
            <person name="Kawaji H."/>
            <person name="Kawagashira N."/>
            <person name="Kawashima T."/>
            <person name="Kojima M."/>
            <person name="Kondo S."/>
            <person name="Konno H."/>
            <person name="Nakano K."/>
            <person name="Ninomiya N."/>
            <person name="Nishio T."/>
            <person name="Okada M."/>
            <person name="Plessy C."/>
            <person name="Shibata K."/>
            <person name="Shiraki T."/>
            <person name="Suzuki S."/>
            <person name="Tagami M."/>
            <person name="Waki K."/>
            <person name="Watahiki A."/>
            <person name="Okamura-Oho Y."/>
            <person name="Suzuki H."/>
            <person name="Kawai J."/>
            <person name="Hayashizaki Y."/>
        </authorList>
    </citation>
    <scope>NUCLEOTIDE SEQUENCE [LARGE SCALE MRNA]</scope>
    <source>
        <strain>C57BL/6J</strain>
        <tissue>Amnion</tissue>
        <tissue>Hippocampus</tissue>
        <tissue>Vagina</tissue>
    </source>
</reference>
<reference key="5">
    <citation type="journal article" date="2004" name="Genome Res.">
        <title>The status, quality, and expansion of the NIH full-length cDNA project: the Mammalian Gene Collection (MGC).</title>
        <authorList>
            <consortium name="The MGC Project Team"/>
        </authorList>
    </citation>
    <scope>NUCLEOTIDE SEQUENCE [LARGE SCALE MRNA]</scope>
    <source>
        <strain>FVB/N</strain>
        <tissue>Colon</tissue>
    </source>
</reference>
<reference key="6">
    <citation type="submission" date="2005-07" db="UniProtKB">
        <authorList>
            <person name="Bienvenut W.V."/>
        </authorList>
    </citation>
    <scope>PROTEIN SEQUENCE OF 2-11; 15-25; 96-103; 174-181; 292-298 AND 341-357</scope>
    <scope>CLEAVAGE OF INITIATOR METHIONINE</scope>
    <scope>ACETYLATION AT ALA-2</scope>
    <scope>IDENTIFICATION BY MASS SPECTROMETRY</scope>
    <source>
        <strain>C57BL/6J</strain>
        <tissue>Liver</tissue>
    </source>
</reference>
<reference key="7">
    <citation type="journal article" date="2005" name="Eur. J. Cell Biol.">
        <title>Molecular characterization and immunohistochemical localization of palmdelphin, a cytosolic isoform of the paralemmin protein family implicated in membrane dynamics.</title>
        <authorList>
            <person name="Hu B."/>
            <person name="Petrasch-Parwez E."/>
            <person name="Laue M.M."/>
            <person name="Kilimann M.W."/>
        </authorList>
    </citation>
    <scope>INTERACTION WITH PALMD</scope>
</reference>
<reference key="8">
    <citation type="submission" date="2009-01" db="UniProtKB">
        <authorList>
            <person name="Lubec G."/>
            <person name="Kang S.U."/>
            <person name="Klug S."/>
            <person name="Sunyer B."/>
            <person name="Chen W.-Q."/>
        </authorList>
    </citation>
    <scope>PROTEIN SEQUENCE OF 26-41; 46-52; 174-222 AND 341-357</scope>
    <scope>IDENTIFICATION BY MASS SPECTROMETRY</scope>
    <source>
        <strain>C57BL/6J</strain>
        <strain>OF1</strain>
        <tissue>Brain</tissue>
        <tissue>Hippocampus</tissue>
    </source>
</reference>
<reference key="9">
    <citation type="journal article" date="2007" name="Dev. Dyn.">
        <title>Glutamine synthetase is essential in early mouse embryogenesis.</title>
        <authorList>
            <person name="He Y."/>
            <person name="Hakvoort T.B."/>
            <person name="Vermeulen J.L."/>
            <person name="Lamers W.H."/>
            <person name="Van Roon M.A."/>
        </authorList>
    </citation>
    <scope>DISRUPTION PHENOTYPE</scope>
</reference>
<reference key="10">
    <citation type="journal article" date="2008" name="J. Proteome Res.">
        <title>Large-scale identification and evolution indexing of tyrosine phosphorylation sites from murine brain.</title>
        <authorList>
            <person name="Ballif B.A."/>
            <person name="Carey G.R."/>
            <person name="Sunyaev S.R."/>
            <person name="Gygi S.P."/>
        </authorList>
    </citation>
    <scope>PHOSPHORYLATION [LARGE SCALE ANALYSIS] AT TYR-104</scope>
    <scope>IDENTIFICATION BY MASS SPECTROMETRY [LARGE SCALE ANALYSIS]</scope>
    <source>
        <tissue>Brain</tissue>
    </source>
</reference>
<reference key="11">
    <citation type="journal article" date="2010" name="Cell">
        <title>A tissue-specific atlas of mouse protein phosphorylation and expression.</title>
        <authorList>
            <person name="Huttlin E.L."/>
            <person name="Jedrychowski M.P."/>
            <person name="Elias J.E."/>
            <person name="Goswami T."/>
            <person name="Rad R."/>
            <person name="Beausoleil S.A."/>
            <person name="Villen J."/>
            <person name="Haas W."/>
            <person name="Sowa M.E."/>
            <person name="Gygi S.P."/>
        </authorList>
    </citation>
    <scope>PHOSPHORYLATION [LARGE SCALE ANALYSIS] AT SER-343</scope>
    <scope>IDENTIFICATION BY MASS SPECTROMETRY [LARGE SCALE ANALYSIS]</scope>
    <source>
        <tissue>Brain</tissue>
        <tissue>Brown adipose tissue</tissue>
        <tissue>Heart</tissue>
        <tissue>Kidney</tissue>
        <tissue>Liver</tissue>
        <tissue>Lung</tissue>
        <tissue>Pancreas</tissue>
        <tissue>Spleen</tissue>
        <tissue>Testis</tissue>
    </source>
</reference>
<reference key="12">
    <citation type="journal article" date="2010" name="J. Neurosci.">
        <title>Proteasomal degradation of glutamine synthetase regulates schwann cell differentiation.</title>
        <authorList>
            <person name="Saitoh F."/>
            <person name="Araki T."/>
        </authorList>
    </citation>
    <scope>UBIQUITINATION</scope>
</reference>
<reference key="13">
    <citation type="journal article" date="2015" name="Proc. Natl. Acad. Sci. U.S.A.">
        <title>Hyperammonemia in gene-targeted mice lacking functional hepatic glutamine synthetase.</title>
        <authorList>
            <person name="Qvartskhava N."/>
            <person name="Lang P.A."/>
            <person name="Goerg B."/>
            <person name="Pozdeev V.I."/>
            <person name="Ortiz M.P."/>
            <person name="Lang K.S."/>
            <person name="Bidmon H.J."/>
            <person name="Lang E."/>
            <person name="Leibrock C.B."/>
            <person name="Herebian D."/>
            <person name="Bode J.G."/>
            <person name="Lang F."/>
            <person name="Haeussinger D."/>
        </authorList>
    </citation>
    <scope>FUNCTION</scope>
    <scope>DISRUPTION PHENOTYPE</scope>
</reference>
<reference key="14">
    <citation type="journal article" date="2018" name="Nature">
        <title>Role of glutamine synthetase in angiogenesis beyond glutamine synthesis.</title>
        <authorList>
            <person name="Eelen G."/>
            <person name="Dubois C."/>
            <person name="Cantelmo A.R."/>
            <person name="Goveia J."/>
            <person name="Bruening U."/>
            <person name="DeRan M."/>
            <person name="Jarugumilli G."/>
            <person name="van Rijssel J."/>
            <person name="Saladino G."/>
            <person name="Comitani F."/>
            <person name="Zecchin A."/>
            <person name="Rocha S."/>
            <person name="Chen R."/>
            <person name="Huang H."/>
            <person name="Vandekeere S."/>
            <person name="Kalucka J."/>
            <person name="Lange C."/>
            <person name="Morales-Rodriguez F."/>
            <person name="Cruys B."/>
            <person name="Treps L."/>
            <person name="Ramer L."/>
            <person name="Vinckier S."/>
            <person name="Brepoels K."/>
            <person name="Wyns S."/>
            <person name="Souffreau J."/>
            <person name="Schoonjans L."/>
            <person name="Lamers W.H."/>
            <person name="Wu Y."/>
            <person name="Haustraete J."/>
            <person name="Hofkens J."/>
            <person name="Liekens S."/>
            <person name="Cubbon R."/>
            <person name="Ghesquiere B."/>
            <person name="Dewerchin M."/>
            <person name="Gervasio F.L."/>
            <person name="Li X."/>
            <person name="van Buul J.D."/>
            <person name="Wu X."/>
            <person name="Carmeliet P."/>
        </authorList>
    </citation>
    <scope>FUNCTION</scope>
    <scope>TISSUE SPECIFICITY</scope>
    <scope>DISRUPTION PHENOTYPE</scope>
</reference>
<reference key="15">
    <citation type="journal article" date="2024" name="Science">
        <title>A glutamine metabolic switch supports erythropoiesis.</title>
        <authorList>
            <person name="Lyu J."/>
            <person name="Gu Z."/>
            <person name="Zhang Y."/>
            <person name="Vu H.S."/>
            <person name="Lechauve C."/>
            <person name="Cai F."/>
            <person name="Cao H."/>
            <person name="Keith J."/>
            <person name="Brancaleoni V."/>
            <person name="Granata F."/>
            <person name="Motta I."/>
            <person name="Cappellini M.D."/>
            <person name="Huang L.J."/>
            <person name="DeBerardinis R.J."/>
            <person name="Weiss M.J."/>
            <person name="Ni M."/>
            <person name="Xu J."/>
        </authorList>
    </citation>
    <scope>FUNCTION</scope>
    <scope>CATALYTIC ACTIVITY</scope>
    <scope>INDUCTION</scope>
</reference>
<protein>
    <recommendedName>
        <fullName evidence="13">Glutamine synthetase</fullName>
        <shortName evidence="13">GS</shortName>
        <ecNumber evidence="2">6.3.1.2</ecNumber>
    </recommendedName>
    <alternativeName>
        <fullName evidence="14">Glutamate--ammonia ligase</fullName>
    </alternativeName>
    <alternativeName>
        <fullName evidence="14">Palmitoyltransferase GLUL</fullName>
        <ecNumber evidence="2">2.3.1.225</ecNumber>
    </alternativeName>
</protein>
<sequence>MATSASSHLNKGIKQMYMSLPQGEKVQAMYIWVDGTGEGLRCKTRTLDCEPKCVEELPEWNFDGSSTFQSEGSNSDMYLHPVAMFRDPFRKDPNKLVLCEVFKYNRKPAETNLRHICKRIMDMVSNQHPWFGMEQEYTLMGTDGHPFGWPSNGFPGPQGPYYCGVGADKAYGRDIVEAHYRACLYAGVKITGTNAEVMPAQWEFQIGPCEGIRMGDHLWIARFILHRVCEDFGVIATFDPKPIPGNWNGAGCHTNFSTKAMREENGLKCIEEAIDKLSKRHQYHIRAYDPKGGLDNARRLTGFHETSNINDFSAGVANRGASIRIPRTVGQEKKGYFEDRRPSANCDPYAVTEAIVRTCLLNETGDEPFQYKN</sequence>
<comment type="function">
    <text evidence="2 9 10 11">Glutamine synthetase that catalyzes the ATP-dependent conversion of glutamate and ammonia to glutamine (PubMed:39541460). Its role depends on tissue localization: in the brain, it regulates the levels of toxic ammonia and converts neurotoxic glutamate to harmless glutamine, whereas in the liver, it is one of the enzymes responsible for the removal of ammonia (PubMed:25870278). Plays a key role in ammonium detoxification during erythropoiesis: the glutamine synthetase activity is required to remove ammonium generated by porphobilinogen deaminase (HMBS) during heme biosynthesis to prevent ammonium accumulation and oxidative stress (PubMed:39541460). Essential for proliferation of fetal skin fibroblasts (By similarity). Independently of its glutamine synthetase activity, required for endothelial cell migration during vascular development (PubMed:30158707). Involved in angiogenesis by regulating membrane localization and activation of the GTPase RHOJ, possibly by promoting RHOJ palmitoylation (By similarity). May act as a palmitoyltransferase for RHOJ: able to autopalmitoylate and then transfer the palmitoyl group to RHOJ (By similarity). Plays a role in ribosomal 40S subunit biogenesis (By similarity). Through the interaction with BEST2, inhibits BEST2 channel activity by affecting the gating at the aperture in the absence of intracellular L-glutamate, but sensitizes BEST2 to intracellular L-glutamate, which promotes the opening of BEST2 and thus relieves its inhibitory effect on BEST2 (By similarity).</text>
</comment>
<comment type="catalytic activity">
    <reaction evidence="11">
        <text>L-glutamate + NH4(+) + ATP = L-glutamine + ADP + phosphate + H(+)</text>
        <dbReference type="Rhea" id="RHEA:16169"/>
        <dbReference type="ChEBI" id="CHEBI:15378"/>
        <dbReference type="ChEBI" id="CHEBI:28938"/>
        <dbReference type="ChEBI" id="CHEBI:29985"/>
        <dbReference type="ChEBI" id="CHEBI:30616"/>
        <dbReference type="ChEBI" id="CHEBI:43474"/>
        <dbReference type="ChEBI" id="CHEBI:58359"/>
        <dbReference type="ChEBI" id="CHEBI:456216"/>
        <dbReference type="EC" id="6.3.1.2"/>
    </reaction>
    <physiologicalReaction direction="left-to-right" evidence="11">
        <dbReference type="Rhea" id="RHEA:16170"/>
    </physiologicalReaction>
</comment>
<comment type="catalytic activity">
    <reaction evidence="2">
        <text>L-cysteinyl-[protein] + hexadecanoyl-CoA = S-hexadecanoyl-L-cysteinyl-[protein] + CoA</text>
        <dbReference type="Rhea" id="RHEA:36683"/>
        <dbReference type="Rhea" id="RHEA-COMP:10131"/>
        <dbReference type="Rhea" id="RHEA-COMP:11032"/>
        <dbReference type="ChEBI" id="CHEBI:29950"/>
        <dbReference type="ChEBI" id="CHEBI:57287"/>
        <dbReference type="ChEBI" id="CHEBI:57379"/>
        <dbReference type="ChEBI" id="CHEBI:74151"/>
        <dbReference type="EC" id="2.3.1.225"/>
    </reaction>
</comment>
<comment type="cofactor">
    <cofactor evidence="1">
        <name>Mg(2+)</name>
        <dbReference type="ChEBI" id="CHEBI:18420"/>
    </cofactor>
    <cofactor evidence="2">
        <name>Mn(2+)</name>
        <dbReference type="ChEBI" id="CHEBI:29035"/>
    </cofactor>
</comment>
<comment type="activity regulation">
    <text evidence="2">Glutamine synthetase activity is inhibited by methionine sulfoximine (MSO).</text>
</comment>
<comment type="subunit">
    <text evidence="2 6">Decamer; composed of two pentamers (By similarity). Interacts with PALMD (PubMed:16323283). Interacts with RHOJ (By similarity). Interacts with BEST2; this interaction tethers a fraction of GLUL to the membrane, causing a decrease of cytosolic glutamine synthase (GS) activity and inhibits the chloride channel activity of BEST2 by affecting the gating at the aperture in the absence of intracellular glutamate (By similarity).</text>
</comment>
<comment type="subcellular location">
    <subcellularLocation>
        <location evidence="2">Cytoplasm</location>
        <location evidence="2">Cytosol</location>
    </subcellularLocation>
    <subcellularLocation>
        <location evidence="1">Microsome</location>
    </subcellularLocation>
    <subcellularLocation>
        <location evidence="1">Mitochondrion</location>
    </subcellularLocation>
    <subcellularLocation>
        <location evidence="2">Cell membrane</location>
        <topology evidence="2">Lipid-anchor</topology>
    </subcellularLocation>
    <text evidence="2">Mainly localizes in the cytosol, with a fraction associated with the cell membrane.</text>
</comment>
<comment type="tissue specificity">
    <text evidence="10">Expressed in microvascular endothelial cells.</text>
</comment>
<comment type="induction">
    <text evidence="11">During erythroid cell maturation.</text>
</comment>
<comment type="PTM">
    <text evidence="2">Acetylated by EP300/p300; acetylation is stimulated by increased glutamine levels and promotes ubiquitin-mediated proteasomal degradation.</text>
</comment>
<comment type="PTM">
    <text evidence="2">Palmitoylated; undergoes autopalmitoylation.</text>
</comment>
<comment type="PTM">
    <text evidence="2 8">Ubiquitinated by ZNRF1 (PubMed:20107048). Ubiquitinated by the DCX (DDB1-CUL4-X-box) E3 ubiquitin-protein ligase complex called CRL4(CRBN), leading to proteasomal degradation (By similarity).</text>
</comment>
<comment type="disruption phenotype">
    <text evidence="7 9 10 11">Embryonic lethality when embryos move from the uterine tube to the uterine environment (PubMed:17557305). Conditional deletion in the liver leads to a marked increase of plasma ammonia levels, causing increased locomotion, impaired fear memory and a slightly reduced life span (PubMed:25870278). Conditional deletion in endothelial cells impairs vessel sprouting during vascular development due to defects in endothelial cell migration (PubMed:30158707). Conditional deletion in erythroid cells causes ammonium accumulation and oxidative stress, impairing erythroid maturation and recovery from anemia (PubMed:39541460).</text>
</comment>
<comment type="similarity">
    <text evidence="14">Belongs to the glutamine synthetase family.</text>
</comment>
<dbReference type="EC" id="6.3.1.2" evidence="2"/>
<dbReference type="EC" id="2.3.1.225" evidence="2"/>
<dbReference type="EMBL" id="X16314">
    <property type="protein sequence ID" value="CAA34381.1"/>
    <property type="molecule type" value="mRNA"/>
</dbReference>
<dbReference type="EMBL" id="U09114">
    <property type="protein sequence ID" value="AAA17989.1"/>
    <property type="molecule type" value="mRNA"/>
</dbReference>
<dbReference type="EMBL" id="AY044241">
    <property type="protein sequence ID" value="AAK95328.1"/>
    <property type="molecule type" value="mRNA"/>
</dbReference>
<dbReference type="EMBL" id="AK159106">
    <property type="protein sequence ID" value="BAE34822.1"/>
    <property type="molecule type" value="mRNA"/>
</dbReference>
<dbReference type="EMBL" id="AK160670">
    <property type="protein sequence ID" value="BAE35950.1"/>
    <property type="molecule type" value="mRNA"/>
</dbReference>
<dbReference type="EMBL" id="AK162685">
    <property type="protein sequence ID" value="BAE37022.1"/>
    <property type="molecule type" value="mRNA"/>
</dbReference>
<dbReference type="EMBL" id="AK168493">
    <property type="protein sequence ID" value="BAE40380.1"/>
    <property type="molecule type" value="mRNA"/>
</dbReference>
<dbReference type="EMBL" id="BC015086">
    <property type="protein sequence ID" value="AAH15086.1"/>
    <property type="molecule type" value="mRNA"/>
</dbReference>
<dbReference type="CCDS" id="CCDS15381.1"/>
<dbReference type="PIR" id="S04991">
    <property type="entry name" value="AJMSQ"/>
</dbReference>
<dbReference type="RefSeq" id="NP_032157.2">
    <property type="nucleotide sequence ID" value="NM_008131.4"/>
</dbReference>
<dbReference type="SMR" id="P15105"/>
<dbReference type="BioGRID" id="199947">
    <property type="interactions" value="23"/>
</dbReference>
<dbReference type="FunCoup" id="P15105">
    <property type="interactions" value="1848"/>
</dbReference>
<dbReference type="IntAct" id="P15105">
    <property type="interactions" value="15"/>
</dbReference>
<dbReference type="MINT" id="P15105"/>
<dbReference type="STRING" id="10090.ENSMUSP00000083375"/>
<dbReference type="GlyGen" id="P15105">
    <property type="glycosylation" value="4 sites, 2 N-linked glycans (2 sites), 1 O-linked glycan (2 sites)"/>
</dbReference>
<dbReference type="iPTMnet" id="P15105"/>
<dbReference type="MetOSite" id="P15105"/>
<dbReference type="PhosphoSitePlus" id="P15105"/>
<dbReference type="SwissPalm" id="P15105"/>
<dbReference type="REPRODUCTION-2DPAGE" id="IPI00626790"/>
<dbReference type="REPRODUCTION-2DPAGE" id="P15105"/>
<dbReference type="CPTAC" id="non-CPTAC-3816"/>
<dbReference type="jPOST" id="P15105"/>
<dbReference type="PaxDb" id="10090-ENSMUSP00000083375"/>
<dbReference type="PeptideAtlas" id="P15105"/>
<dbReference type="ProteomicsDB" id="266809"/>
<dbReference type="Pumba" id="P15105"/>
<dbReference type="Antibodypedia" id="1536">
    <property type="antibodies" value="766 antibodies from 43 providers"/>
</dbReference>
<dbReference type="DNASU" id="14645"/>
<dbReference type="Ensembl" id="ENSMUST00000086199.12">
    <property type="protein sequence ID" value="ENSMUSP00000083375.6"/>
    <property type="gene ID" value="ENSMUSG00000026473.18"/>
</dbReference>
<dbReference type="Ensembl" id="ENSMUST00000381746.1">
    <property type="protein sequence ID" value="ENSMUSP00000160105.1"/>
    <property type="gene ID" value="ENSMUSG00000026473.18"/>
</dbReference>
<dbReference type="Ensembl" id="ENSMUST00000381747.1">
    <property type="protein sequence ID" value="ENSMUSP00000160106.1"/>
    <property type="gene ID" value="ENSMUSG00000026473.18"/>
</dbReference>
<dbReference type="Ensembl" id="ENSMUST00000381748.1">
    <property type="protein sequence ID" value="ENSMUSP00000160107.1"/>
    <property type="gene ID" value="ENSMUSG00000026473.18"/>
</dbReference>
<dbReference type="GeneID" id="14645"/>
<dbReference type="KEGG" id="mmu:14645"/>
<dbReference type="UCSC" id="uc007daq.2">
    <property type="organism name" value="mouse"/>
</dbReference>
<dbReference type="AGR" id="MGI:95739"/>
<dbReference type="CTD" id="2752"/>
<dbReference type="MGI" id="MGI:95739">
    <property type="gene designation" value="Glul"/>
</dbReference>
<dbReference type="VEuPathDB" id="HostDB:ENSMUSG00000026473"/>
<dbReference type="eggNOG" id="KOG0683">
    <property type="taxonomic scope" value="Eukaryota"/>
</dbReference>
<dbReference type="GeneTree" id="ENSGT00390000010047"/>
<dbReference type="HOGENOM" id="CLU_036762_1_1_1"/>
<dbReference type="InParanoid" id="P15105"/>
<dbReference type="OMA" id="DRRPNAN"/>
<dbReference type="OrthoDB" id="1936100at2759"/>
<dbReference type="PhylomeDB" id="P15105"/>
<dbReference type="TreeFam" id="TF300491"/>
<dbReference type="BRENDA" id="6.3.1.2">
    <property type="organism ID" value="3474"/>
</dbReference>
<dbReference type="Reactome" id="R-MMU-210455">
    <property type="pathway name" value="Astrocytic Glutamate-Glutamine Uptake And Metabolism"/>
</dbReference>
<dbReference type="Reactome" id="R-MMU-8964539">
    <property type="pathway name" value="Glutamate and glutamine metabolism"/>
</dbReference>
<dbReference type="BioGRID-ORCS" id="14645">
    <property type="hits" value="7 hits in 78 CRISPR screens"/>
</dbReference>
<dbReference type="CD-CODE" id="CE726F99">
    <property type="entry name" value="Postsynaptic density"/>
</dbReference>
<dbReference type="ChiTaRS" id="Glul">
    <property type="organism name" value="mouse"/>
</dbReference>
<dbReference type="PRO" id="PR:P15105"/>
<dbReference type="Proteomes" id="UP000000589">
    <property type="component" value="Chromosome 1"/>
</dbReference>
<dbReference type="RNAct" id="P15105">
    <property type="molecule type" value="protein"/>
</dbReference>
<dbReference type="Bgee" id="ENSMUSG00000026473">
    <property type="expression patterns" value="Expressed in efferent duct and 263 other cell types or tissues"/>
</dbReference>
<dbReference type="ExpressionAtlas" id="P15105">
    <property type="expression patterns" value="baseline and differential"/>
</dbReference>
<dbReference type="GO" id="GO:0044297">
    <property type="term" value="C:cell body"/>
    <property type="evidence" value="ECO:0000314"/>
    <property type="project" value="MGI"/>
</dbReference>
<dbReference type="GO" id="GO:0005737">
    <property type="term" value="C:cytoplasm"/>
    <property type="evidence" value="ECO:0000314"/>
    <property type="project" value="MGI"/>
</dbReference>
<dbReference type="GO" id="GO:0005829">
    <property type="term" value="C:cytosol"/>
    <property type="evidence" value="ECO:0000250"/>
    <property type="project" value="UniProtKB"/>
</dbReference>
<dbReference type="GO" id="GO:0005783">
    <property type="term" value="C:endoplasmic reticulum"/>
    <property type="evidence" value="ECO:0007669"/>
    <property type="project" value="UniProtKB-KW"/>
</dbReference>
<dbReference type="GO" id="GO:0097386">
    <property type="term" value="C:glial cell projection"/>
    <property type="evidence" value="ECO:0000314"/>
    <property type="project" value="MGI"/>
</dbReference>
<dbReference type="GO" id="GO:0005739">
    <property type="term" value="C:mitochondrion"/>
    <property type="evidence" value="ECO:0007005"/>
    <property type="project" value="MGI"/>
</dbReference>
<dbReference type="GO" id="GO:0043209">
    <property type="term" value="C:myelin sheath"/>
    <property type="evidence" value="ECO:0007005"/>
    <property type="project" value="UniProtKB"/>
</dbReference>
<dbReference type="GO" id="GO:0005886">
    <property type="term" value="C:plasma membrane"/>
    <property type="evidence" value="ECO:0000250"/>
    <property type="project" value="UniProtKB"/>
</dbReference>
<dbReference type="GO" id="GO:0005524">
    <property type="term" value="F:ATP binding"/>
    <property type="evidence" value="ECO:0007669"/>
    <property type="project" value="UniProtKB-KW"/>
</dbReference>
<dbReference type="GO" id="GO:0004356">
    <property type="term" value="F:glutamine synthetase activity"/>
    <property type="evidence" value="ECO:0000314"/>
    <property type="project" value="UniProtKB"/>
</dbReference>
<dbReference type="GO" id="GO:0042802">
    <property type="term" value="F:identical protein binding"/>
    <property type="evidence" value="ECO:0007669"/>
    <property type="project" value="Ensembl"/>
</dbReference>
<dbReference type="GO" id="GO:0046872">
    <property type="term" value="F:metal ion binding"/>
    <property type="evidence" value="ECO:0007669"/>
    <property type="project" value="UniProtKB-KW"/>
</dbReference>
<dbReference type="GO" id="GO:0019706">
    <property type="term" value="F:protein-cysteine S-palmitoyltransferase activity"/>
    <property type="evidence" value="ECO:0000250"/>
    <property type="project" value="UniProtKB"/>
</dbReference>
<dbReference type="GO" id="GO:0001525">
    <property type="term" value="P:angiogenesis"/>
    <property type="evidence" value="ECO:0007669"/>
    <property type="project" value="UniProtKB-KW"/>
</dbReference>
<dbReference type="GO" id="GO:0008283">
    <property type="term" value="P:cell population proliferation"/>
    <property type="evidence" value="ECO:0007669"/>
    <property type="project" value="Ensembl"/>
</dbReference>
<dbReference type="GO" id="GO:0009267">
    <property type="term" value="P:cellular response to starvation"/>
    <property type="evidence" value="ECO:0000270"/>
    <property type="project" value="MGI"/>
</dbReference>
<dbReference type="GO" id="GO:0006542">
    <property type="term" value="P:glutamine biosynthetic process"/>
    <property type="evidence" value="ECO:0007669"/>
    <property type="project" value="InterPro"/>
</dbReference>
<dbReference type="GO" id="GO:0097275">
    <property type="term" value="P:intracellular ammonium homeostasis"/>
    <property type="evidence" value="ECO:0000314"/>
    <property type="project" value="UniProtKB"/>
</dbReference>
<dbReference type="GO" id="GO:0045648">
    <property type="term" value="P:positive regulation of erythrocyte differentiation"/>
    <property type="evidence" value="ECO:0000315"/>
    <property type="project" value="UniProtKB"/>
</dbReference>
<dbReference type="GO" id="GO:0018345">
    <property type="term" value="P:protein palmitoylation"/>
    <property type="evidence" value="ECO:0000250"/>
    <property type="project" value="UniProtKB"/>
</dbReference>
<dbReference type="GO" id="GO:0010594">
    <property type="term" value="P:regulation of endothelial cell migration"/>
    <property type="evidence" value="ECO:0000315"/>
    <property type="project" value="UniProtKB"/>
</dbReference>
<dbReference type="GO" id="GO:1904749">
    <property type="term" value="P:regulation of protein localization to nucleolus"/>
    <property type="evidence" value="ECO:0007669"/>
    <property type="project" value="Ensembl"/>
</dbReference>
<dbReference type="GO" id="GO:1903670">
    <property type="term" value="P:regulation of sprouting angiogenesis"/>
    <property type="evidence" value="ECO:0000315"/>
    <property type="project" value="UniProtKB"/>
</dbReference>
<dbReference type="GO" id="GO:0009749">
    <property type="term" value="P:response to glucose"/>
    <property type="evidence" value="ECO:0000315"/>
    <property type="project" value="MGI"/>
</dbReference>
<dbReference type="GO" id="GO:0042254">
    <property type="term" value="P:ribosome biogenesis"/>
    <property type="evidence" value="ECO:0007669"/>
    <property type="project" value="Ensembl"/>
</dbReference>
<dbReference type="FunFam" id="3.10.20.70:FF:000004">
    <property type="entry name" value="Glutamine synthetase"/>
    <property type="match status" value="1"/>
</dbReference>
<dbReference type="FunFam" id="3.30.590.10:FF:000011">
    <property type="entry name" value="Glutamine synthetase"/>
    <property type="match status" value="1"/>
</dbReference>
<dbReference type="Gene3D" id="3.10.20.70">
    <property type="entry name" value="Glutamine synthetase, N-terminal domain"/>
    <property type="match status" value="1"/>
</dbReference>
<dbReference type="Gene3D" id="3.30.590.10">
    <property type="entry name" value="Glutamine synthetase/guanido kinase, catalytic domain"/>
    <property type="match status" value="2"/>
</dbReference>
<dbReference type="InterPro" id="IPR008147">
    <property type="entry name" value="Gln_synt_N"/>
</dbReference>
<dbReference type="InterPro" id="IPR036651">
    <property type="entry name" value="Gln_synt_N_sf"/>
</dbReference>
<dbReference type="InterPro" id="IPR014746">
    <property type="entry name" value="Gln_synth/guanido_kin_cat_dom"/>
</dbReference>
<dbReference type="InterPro" id="IPR008146">
    <property type="entry name" value="Gln_synth_cat_dom"/>
</dbReference>
<dbReference type="InterPro" id="IPR027303">
    <property type="entry name" value="Gln_synth_gly_rich_site"/>
</dbReference>
<dbReference type="InterPro" id="IPR027302">
    <property type="entry name" value="Gln_synth_N_conserv_site"/>
</dbReference>
<dbReference type="InterPro" id="IPR050292">
    <property type="entry name" value="Glutamine_Synthetase"/>
</dbReference>
<dbReference type="PANTHER" id="PTHR20852">
    <property type="entry name" value="GLUTAMINE SYNTHETASE"/>
    <property type="match status" value="1"/>
</dbReference>
<dbReference type="PANTHER" id="PTHR20852:SF45">
    <property type="entry name" value="GLUTAMINE SYNTHETASE"/>
    <property type="match status" value="1"/>
</dbReference>
<dbReference type="Pfam" id="PF00120">
    <property type="entry name" value="Gln-synt_C"/>
    <property type="match status" value="1"/>
</dbReference>
<dbReference type="Pfam" id="PF03951">
    <property type="entry name" value="Gln-synt_N"/>
    <property type="match status" value="1"/>
</dbReference>
<dbReference type="SMART" id="SM01230">
    <property type="entry name" value="Gln-synt_C"/>
    <property type="match status" value="1"/>
</dbReference>
<dbReference type="SUPFAM" id="SSF54368">
    <property type="entry name" value="Glutamine synthetase, N-terminal domain"/>
    <property type="match status" value="1"/>
</dbReference>
<dbReference type="SUPFAM" id="SSF55931">
    <property type="entry name" value="Glutamine synthetase/guanido kinase"/>
    <property type="match status" value="1"/>
</dbReference>
<dbReference type="PROSITE" id="PS00180">
    <property type="entry name" value="GLNA_1"/>
    <property type="match status" value="1"/>
</dbReference>
<dbReference type="PROSITE" id="PS00181">
    <property type="entry name" value="GLNA_ATP"/>
    <property type="match status" value="1"/>
</dbReference>
<dbReference type="PROSITE" id="PS51986">
    <property type="entry name" value="GS_BETA_GRASP"/>
    <property type="match status" value="1"/>
</dbReference>
<dbReference type="PROSITE" id="PS51987">
    <property type="entry name" value="GS_CATALYTIC"/>
    <property type="match status" value="1"/>
</dbReference>
<proteinExistence type="evidence at protein level"/>